<protein>
    <recommendedName>
        <fullName evidence="2">Formamidopyrimidine-DNA glycosylase</fullName>
        <shortName evidence="2">Fapy-DNA glycosylase</shortName>
        <ecNumber evidence="2">3.2.2.23</ecNumber>
    </recommendedName>
    <alternativeName>
        <fullName evidence="2">DNA-(apurinic or apyrimidinic site) lyase MutM</fullName>
        <shortName evidence="2">AP lyase MutM</shortName>
        <ecNumber evidence="2">4.2.99.18</ecNumber>
    </alternativeName>
</protein>
<organism>
    <name type="scientific">Paracoccus denitrificans (strain Pd 1222)</name>
    <dbReference type="NCBI Taxonomy" id="318586"/>
    <lineage>
        <taxon>Bacteria</taxon>
        <taxon>Pseudomonadati</taxon>
        <taxon>Pseudomonadota</taxon>
        <taxon>Alphaproteobacteria</taxon>
        <taxon>Rhodobacterales</taxon>
        <taxon>Paracoccaceae</taxon>
        <taxon>Paracoccus</taxon>
    </lineage>
</organism>
<keyword id="KW-0227">DNA damage</keyword>
<keyword id="KW-0234">DNA repair</keyword>
<keyword id="KW-0238">DNA-binding</keyword>
<keyword id="KW-0326">Glycosidase</keyword>
<keyword id="KW-0378">Hydrolase</keyword>
<keyword id="KW-0456">Lyase</keyword>
<keyword id="KW-0479">Metal-binding</keyword>
<keyword id="KW-0511">Multifunctional enzyme</keyword>
<keyword id="KW-1185">Reference proteome</keyword>
<keyword id="KW-0862">Zinc</keyword>
<keyword id="KW-0863">Zinc-finger</keyword>
<dbReference type="EC" id="3.2.2.23" evidence="2"/>
<dbReference type="EC" id="4.2.99.18" evidence="2"/>
<dbReference type="EMBL" id="CP000490">
    <property type="protein sequence ID" value="ABL72576.1"/>
    <property type="molecule type" value="Genomic_DNA"/>
</dbReference>
<dbReference type="RefSeq" id="WP_011750737.1">
    <property type="nucleotide sequence ID" value="NC_008687.1"/>
</dbReference>
<dbReference type="SMR" id="A1BAN2"/>
<dbReference type="STRING" id="318586.Pden_4512"/>
<dbReference type="EnsemblBacteria" id="ABL72576">
    <property type="protein sequence ID" value="ABL72576"/>
    <property type="gene ID" value="Pden_4512"/>
</dbReference>
<dbReference type="GeneID" id="93454179"/>
<dbReference type="KEGG" id="pde:Pden_4512"/>
<dbReference type="eggNOG" id="COG0266">
    <property type="taxonomic scope" value="Bacteria"/>
</dbReference>
<dbReference type="HOGENOM" id="CLU_038423_1_1_5"/>
<dbReference type="OrthoDB" id="9800855at2"/>
<dbReference type="Proteomes" id="UP000000361">
    <property type="component" value="Chromosome 2"/>
</dbReference>
<dbReference type="GO" id="GO:0034039">
    <property type="term" value="F:8-oxo-7,8-dihydroguanine DNA N-glycosylase activity"/>
    <property type="evidence" value="ECO:0007669"/>
    <property type="project" value="TreeGrafter"/>
</dbReference>
<dbReference type="GO" id="GO:0140078">
    <property type="term" value="F:class I DNA-(apurinic or apyrimidinic site) endonuclease activity"/>
    <property type="evidence" value="ECO:0007669"/>
    <property type="project" value="UniProtKB-EC"/>
</dbReference>
<dbReference type="GO" id="GO:0003684">
    <property type="term" value="F:damaged DNA binding"/>
    <property type="evidence" value="ECO:0007669"/>
    <property type="project" value="InterPro"/>
</dbReference>
<dbReference type="GO" id="GO:0008270">
    <property type="term" value="F:zinc ion binding"/>
    <property type="evidence" value="ECO:0007669"/>
    <property type="project" value="UniProtKB-UniRule"/>
</dbReference>
<dbReference type="GO" id="GO:0006284">
    <property type="term" value="P:base-excision repair"/>
    <property type="evidence" value="ECO:0007669"/>
    <property type="project" value="InterPro"/>
</dbReference>
<dbReference type="CDD" id="cd08966">
    <property type="entry name" value="EcFpg-like_N"/>
    <property type="match status" value="1"/>
</dbReference>
<dbReference type="FunFam" id="1.10.8.50:FF:000003">
    <property type="entry name" value="Formamidopyrimidine-DNA glycosylase"/>
    <property type="match status" value="1"/>
</dbReference>
<dbReference type="Gene3D" id="1.10.8.50">
    <property type="match status" value="1"/>
</dbReference>
<dbReference type="Gene3D" id="3.20.190.10">
    <property type="entry name" value="MutM-like, N-terminal"/>
    <property type="match status" value="1"/>
</dbReference>
<dbReference type="HAMAP" id="MF_00103">
    <property type="entry name" value="Fapy_DNA_glycosyl"/>
    <property type="match status" value="1"/>
</dbReference>
<dbReference type="InterPro" id="IPR015886">
    <property type="entry name" value="DNA_glyclase/AP_lyase_DNA-bd"/>
</dbReference>
<dbReference type="InterPro" id="IPR020629">
    <property type="entry name" value="Formamido-pyr_DNA_Glyclase"/>
</dbReference>
<dbReference type="InterPro" id="IPR012319">
    <property type="entry name" value="FPG_cat"/>
</dbReference>
<dbReference type="InterPro" id="IPR035937">
    <property type="entry name" value="MutM-like_N-ter"/>
</dbReference>
<dbReference type="InterPro" id="IPR010979">
    <property type="entry name" value="Ribosomal_uS13-like_H2TH"/>
</dbReference>
<dbReference type="InterPro" id="IPR000214">
    <property type="entry name" value="Znf_DNA_glyclase/AP_lyase"/>
</dbReference>
<dbReference type="InterPro" id="IPR010663">
    <property type="entry name" value="Znf_FPG/IleRS"/>
</dbReference>
<dbReference type="NCBIfam" id="TIGR00577">
    <property type="entry name" value="fpg"/>
    <property type="match status" value="1"/>
</dbReference>
<dbReference type="NCBIfam" id="NF002211">
    <property type="entry name" value="PRK01103.1"/>
    <property type="match status" value="1"/>
</dbReference>
<dbReference type="PANTHER" id="PTHR22993">
    <property type="entry name" value="FORMAMIDOPYRIMIDINE-DNA GLYCOSYLASE"/>
    <property type="match status" value="1"/>
</dbReference>
<dbReference type="PANTHER" id="PTHR22993:SF9">
    <property type="entry name" value="FORMAMIDOPYRIMIDINE-DNA GLYCOSYLASE"/>
    <property type="match status" value="1"/>
</dbReference>
<dbReference type="Pfam" id="PF01149">
    <property type="entry name" value="Fapy_DNA_glyco"/>
    <property type="match status" value="1"/>
</dbReference>
<dbReference type="Pfam" id="PF06831">
    <property type="entry name" value="H2TH"/>
    <property type="match status" value="1"/>
</dbReference>
<dbReference type="Pfam" id="PF06827">
    <property type="entry name" value="zf-FPG_IleRS"/>
    <property type="match status" value="1"/>
</dbReference>
<dbReference type="SMART" id="SM00898">
    <property type="entry name" value="Fapy_DNA_glyco"/>
    <property type="match status" value="1"/>
</dbReference>
<dbReference type="SMART" id="SM01232">
    <property type="entry name" value="H2TH"/>
    <property type="match status" value="1"/>
</dbReference>
<dbReference type="SUPFAM" id="SSF57716">
    <property type="entry name" value="Glucocorticoid receptor-like (DNA-binding domain)"/>
    <property type="match status" value="1"/>
</dbReference>
<dbReference type="SUPFAM" id="SSF81624">
    <property type="entry name" value="N-terminal domain of MutM-like DNA repair proteins"/>
    <property type="match status" value="1"/>
</dbReference>
<dbReference type="SUPFAM" id="SSF46946">
    <property type="entry name" value="S13-like H2TH domain"/>
    <property type="match status" value="1"/>
</dbReference>
<dbReference type="PROSITE" id="PS51068">
    <property type="entry name" value="FPG_CAT"/>
    <property type="match status" value="1"/>
</dbReference>
<dbReference type="PROSITE" id="PS51066">
    <property type="entry name" value="ZF_FPG_2"/>
    <property type="match status" value="1"/>
</dbReference>
<sequence length="281" mass="30669">MPELPEVETVRRGLQPHLEGRVIARAEARRPDLRWPLPPDLVQVLTGARVVALRRRSKYILAELEDRGSLLLHLGMSGRMLIEGESQGDFHRDPAILPRHDHVVLWNDQGTRITFNDARRFGMVDLVPPGAEHPLLAHLGPEPLSDAFTAEALAAAFAGRRMPVKAALLDQRIVAGLGNIYVSEALYRAGIDPRRLAGAVTAPEVAALVGHVRAVLEEAIAAGGSSLRDHRQATGELGYFQHSFRVYGREGAPCPTPGCTGTVQRIVQSGRSSFFCPLCQQ</sequence>
<comment type="function">
    <text evidence="2">Involved in base excision repair of DNA damaged by oxidation or by mutagenic agents. Acts as a DNA glycosylase that recognizes and removes damaged bases. Has a preference for oxidized purines, such as 7,8-dihydro-8-oxoguanine (8-oxoG). Has AP (apurinic/apyrimidinic) lyase activity and introduces nicks in the DNA strand. Cleaves the DNA backbone by beta-delta elimination to generate a single-strand break at the site of the removed base with both 3'- and 5'-phosphates.</text>
</comment>
<comment type="catalytic activity">
    <reaction evidence="2">
        <text>Hydrolysis of DNA containing ring-opened 7-methylguanine residues, releasing 2,6-diamino-4-hydroxy-5-(N-methyl)formamidopyrimidine.</text>
        <dbReference type="EC" id="3.2.2.23"/>
    </reaction>
</comment>
<comment type="catalytic activity">
    <reaction evidence="2">
        <text>2'-deoxyribonucleotide-(2'-deoxyribose 5'-phosphate)-2'-deoxyribonucleotide-DNA = a 3'-end 2'-deoxyribonucleotide-(2,3-dehydro-2,3-deoxyribose 5'-phosphate)-DNA + a 5'-end 5'-phospho-2'-deoxyribonucleoside-DNA + H(+)</text>
        <dbReference type="Rhea" id="RHEA:66592"/>
        <dbReference type="Rhea" id="RHEA-COMP:13180"/>
        <dbReference type="Rhea" id="RHEA-COMP:16897"/>
        <dbReference type="Rhea" id="RHEA-COMP:17067"/>
        <dbReference type="ChEBI" id="CHEBI:15378"/>
        <dbReference type="ChEBI" id="CHEBI:136412"/>
        <dbReference type="ChEBI" id="CHEBI:157695"/>
        <dbReference type="ChEBI" id="CHEBI:167181"/>
        <dbReference type="EC" id="4.2.99.18"/>
    </reaction>
</comment>
<comment type="cofactor">
    <cofactor evidence="2">
        <name>Zn(2+)</name>
        <dbReference type="ChEBI" id="CHEBI:29105"/>
    </cofactor>
    <text evidence="2">Binds 1 zinc ion per subunit.</text>
</comment>
<comment type="subunit">
    <text evidence="2">Monomer.</text>
</comment>
<comment type="similarity">
    <text evidence="2">Belongs to the FPG family.</text>
</comment>
<name>FPG_PARDP</name>
<gene>
    <name evidence="2" type="primary">mutM</name>
    <name evidence="2" type="synonym">fpg</name>
    <name type="ordered locus">Pden_4512</name>
</gene>
<feature type="initiator methionine" description="Removed" evidence="1">
    <location>
        <position position="1"/>
    </location>
</feature>
<feature type="chain" id="PRO_1000008730" description="Formamidopyrimidine-DNA glycosylase">
    <location>
        <begin position="2"/>
        <end position="281"/>
    </location>
</feature>
<feature type="zinc finger region" description="FPG-type" evidence="2">
    <location>
        <begin position="245"/>
        <end position="281"/>
    </location>
</feature>
<feature type="active site" description="Schiff-base intermediate with DNA" evidence="2">
    <location>
        <position position="2"/>
    </location>
</feature>
<feature type="active site" description="Proton donor" evidence="2">
    <location>
        <position position="3"/>
    </location>
</feature>
<feature type="active site" description="Proton donor; for beta-elimination activity" evidence="2">
    <location>
        <position position="58"/>
    </location>
</feature>
<feature type="active site" description="Proton donor; for delta-elimination activity" evidence="2">
    <location>
        <position position="271"/>
    </location>
</feature>
<feature type="binding site" evidence="2">
    <location>
        <position position="100"/>
    </location>
    <ligand>
        <name>DNA</name>
        <dbReference type="ChEBI" id="CHEBI:16991"/>
    </ligand>
</feature>
<feature type="binding site" evidence="2">
    <location>
        <position position="119"/>
    </location>
    <ligand>
        <name>DNA</name>
        <dbReference type="ChEBI" id="CHEBI:16991"/>
    </ligand>
</feature>
<feature type="binding site" evidence="2">
    <location>
        <position position="160"/>
    </location>
    <ligand>
        <name>DNA</name>
        <dbReference type="ChEBI" id="CHEBI:16991"/>
    </ligand>
</feature>
<proteinExistence type="inferred from homology"/>
<evidence type="ECO:0000250" key="1"/>
<evidence type="ECO:0000255" key="2">
    <source>
        <dbReference type="HAMAP-Rule" id="MF_00103"/>
    </source>
</evidence>
<accession>A1BAN2</accession>
<reference key="1">
    <citation type="submission" date="2006-12" db="EMBL/GenBank/DDBJ databases">
        <title>Complete sequence of chromosome 2 of Paracoccus denitrificans PD1222.</title>
        <authorList>
            <person name="Copeland A."/>
            <person name="Lucas S."/>
            <person name="Lapidus A."/>
            <person name="Barry K."/>
            <person name="Detter J.C."/>
            <person name="Glavina del Rio T."/>
            <person name="Hammon N."/>
            <person name="Israni S."/>
            <person name="Dalin E."/>
            <person name="Tice H."/>
            <person name="Pitluck S."/>
            <person name="Munk A.C."/>
            <person name="Brettin T."/>
            <person name="Bruce D."/>
            <person name="Han C."/>
            <person name="Tapia R."/>
            <person name="Gilna P."/>
            <person name="Schmutz J."/>
            <person name="Larimer F."/>
            <person name="Land M."/>
            <person name="Hauser L."/>
            <person name="Kyrpides N."/>
            <person name="Lykidis A."/>
            <person name="Spiro S."/>
            <person name="Richardson D.J."/>
            <person name="Moir J.W.B."/>
            <person name="Ferguson S.J."/>
            <person name="van Spanning R.J.M."/>
            <person name="Richardson P."/>
        </authorList>
    </citation>
    <scope>NUCLEOTIDE SEQUENCE [LARGE SCALE GENOMIC DNA]</scope>
    <source>
        <strain>Pd 1222</strain>
    </source>
</reference>